<reference key="1">
    <citation type="journal article" date="2001" name="Biochem. Biophys. Res. Commun.">
        <title>Molecular genetic identification of a candidate receptor gene for sweet taste.</title>
        <authorList>
            <person name="Kitagawa M."/>
            <person name="Kusakabe Y."/>
            <person name="Miura H."/>
            <person name="Ninomiya Y."/>
            <person name="Hino A."/>
        </authorList>
    </citation>
    <scope>NUCLEOTIDE SEQUENCE [MRNA]</scope>
    <scope>TISSUE SPECIFICITY</scope>
    <scope>VARIANTS ALA-55; THR-60; LEU-61; GLN-371 AND THR-706</scope>
    <source>
        <strain>C57BL/6N</strain>
        <strain>C57BL/6NCr</strain>
        <tissue>Brain</tissue>
        <tissue>Circumvallate papilla</tissue>
    </source>
</reference>
<reference key="2">
    <citation type="journal article" date="2001" name="Nat. Neurosci.">
        <title>A candidate taste receptor gene near a sweet taste locus.</title>
        <authorList>
            <person name="Montmayeur J.-P."/>
            <person name="Liberles S.D."/>
            <person name="Matsunami H."/>
            <person name="Buck L.B."/>
        </authorList>
    </citation>
    <scope>NUCLEOTIDE SEQUENCE [MRNA]</scope>
    <scope>TISSUE SPECIFICITY</scope>
    <scope>VARIANTS ALA-55; THR-60; LEU-61; CYS-261; GLN-371; SER-692; THR-706 AND GLU-855</scope>
    <source>
        <strain>C57BL/6J</strain>
        <strain>DBA/2J</strain>
        <strain>SWR/J</strain>
        <tissue>Circumvallate papilla</tissue>
        <tissue>Foliate papilla</tissue>
    </source>
</reference>
<reference key="3">
    <citation type="journal article" date="2001" name="Chem. Senses">
        <title>Positional cloning of the mouse saccharin preference (Sac) locus.</title>
        <authorList>
            <person name="Bachmanov A.A."/>
            <person name="Li X."/>
            <person name="Reed D.R."/>
            <person name="Ohmen J.D."/>
            <person name="Li S."/>
            <person name="Chen Z."/>
            <person name="Tordoff M.G."/>
            <person name="de Jong P.J."/>
            <person name="Wu C."/>
            <person name="West D.B."/>
            <person name="Chatterjee A."/>
            <person name="Ross D.A."/>
            <person name="Beauchamp G.K."/>
        </authorList>
    </citation>
    <scope>NUCLEOTIDE SEQUENCE [MRNA]</scope>
    <scope>VARIANTS ALA-55 AND THR-60</scope>
    <source>
        <strain>129/J</strain>
        <strain>AKR/J</strain>
        <strain>BALB/cByJ</strain>
        <strain>C3H/HeJ</strain>
        <strain>C57BL/6ByJ</strain>
        <strain>C57L/J</strain>
        <strain>CAST/EiJ</strain>
        <strain>CBA/J</strain>
        <strain>DBA/2J</strain>
        <strain>IS/CamEi</strain>
        <strain>SEA/GnJ</strain>
        <strain>ST/bJ</strain>
        <strain>SWR/J</strain>
    </source>
</reference>
<reference key="4">
    <citation type="journal article" date="2001" name="Cell">
        <title>Mammalian sweet taste receptors.</title>
        <authorList>
            <person name="Nelson G."/>
            <person name="Hoon M.A."/>
            <person name="Chandrashekar J."/>
            <person name="Zhang Y."/>
            <person name="Ryba N.J.P."/>
            <person name="Zuker C.S."/>
        </authorList>
    </citation>
    <scope>NUCLEOTIDE SEQUENCE [MRNA]</scope>
    <scope>VARIANTS ALA-55; THR-60; LEU-61; CYS-261; GLN-371; SER-692; THR-706 AND GLU-855</scope>
    <source>
        <strain>129/Sv</strain>
        <strain>AKR/J</strain>
        <strain>BALB/cJ</strain>
        <strain>C3H/HeJ</strain>
        <strain>C57BL/6J</strain>
        <strain>C57L/J</strain>
        <strain>DBA/1LacJ</strain>
        <strain>DBA/2J</strain>
        <strain>FVB/N</strain>
        <strain>ST/bJ</strain>
        <strain>SWR/J</strain>
    </source>
</reference>
<reference key="5">
    <citation type="journal article" date="2001" name="J. Neurochem.">
        <title>Identification of a novel member of the T1R family of putative taste receptors.</title>
        <authorList>
            <person name="Sainz E."/>
            <person name="Korley J.N."/>
            <person name="Battey J.F."/>
            <person name="Sullivan S.L."/>
        </authorList>
    </citation>
    <scope>NUCLEOTIDE SEQUENCE</scope>
    <scope>TISSUE SPECIFICITY</scope>
    <scope>VARIANTS ALA-55; THR-60; LEU-61; GLN-371; THR-706 AND GLU-855</scope>
    <source>
        <strain>129/Sv</strain>
        <strain>C57BL/6J</strain>
    </source>
</reference>
<reference key="6">
    <citation type="journal article" date="2002" name="Mamm. Genome">
        <title>Genetic, physical, and comparative map of the subtelomeric region of mouse chromosome 4.</title>
        <authorList>
            <person name="Li X."/>
            <person name="Bachmanov A.A."/>
            <person name="Li S."/>
            <person name="Chen Z."/>
            <person name="Tordoff M.G."/>
            <person name="Beauchamp G.K."/>
            <person name="de Jong P.J."/>
            <person name="Wu C."/>
            <person name="Chen L."/>
            <person name="West D.B."/>
            <person name="Ross D.A."/>
            <person name="Ohmen J.D."/>
            <person name="Reed D.R."/>
        </authorList>
    </citation>
    <scope>NUCLEOTIDE SEQUENCE [MRNA]</scope>
    <scope>VARIANTS ALA-55; THR-60 AND LEU-61</scope>
    <source>
        <strain>129/SvEv</strain>
        <strain>C57BL/6J</strain>
    </source>
</reference>
<reference key="7">
    <citation type="journal article" date="2003" name="In Vitro Cell. Dev. Biol. Anim.">
        <title>Taste receptor T1R3 is an essential molecule for the cellular recognition of the disaccharide trehalose.</title>
        <authorList>
            <person name="Ariyasu T."/>
            <person name="Matsumoto S."/>
            <person name="Kyono F."/>
            <person name="Hanaya T."/>
            <person name="Arai S."/>
            <person name="Ikeda M."/>
            <person name="Kurimoto M."/>
        </authorList>
    </citation>
    <scope>NUCLEOTIDE SEQUENCE</scope>
    <scope>FUNCTION</scope>
    <scope>VARIANT ASN-706</scope>
    <source>
        <strain>C57BL/6J</strain>
    </source>
</reference>
<reference key="8">
    <citation type="journal article" date="2001" name="Nat. Genet.">
        <title>Tas1r3, encoding a new candidate taste receptor, is allelic to the sweet responsiveness locus Sac.</title>
        <authorList>
            <person name="Max M."/>
            <person name="Shanker Y.G."/>
            <person name="Huang L."/>
            <person name="Rong M."/>
            <person name="Liu Z."/>
            <person name="Campagne F."/>
            <person name="Weinstein H."/>
            <person name="Damak S."/>
            <person name="Margolskee R.F."/>
        </authorList>
    </citation>
    <scope>NUCLEOTIDE SEQUENCE [GENOMIC DNA]</scope>
    <scope>VARIANTS ALA-55; THR-60; LEU-61; CYS-261; GLN-371; SER-692 AND THR-706</scope>
    <scope>TISSUE SPECIFICITY</scope>
    <scope>GLYCOSYLATION AT ASN-58 (VARIANT THR-60)</scope>
    <source>
        <strain>129/SvEv</strain>
        <strain>BALB/cJ</strain>
        <strain>C3H/HeJ</strain>
        <strain>C57BL/6J</strain>
        <strain>DBA/2J</strain>
        <strain>FVB/N</strain>
        <strain>ST/bJ</strain>
        <strain>SWR/J</strain>
    </source>
</reference>
<reference key="9">
    <citation type="journal article" date="2009" name="PLoS Biol.">
        <title>Lineage-specific biology revealed by a finished genome assembly of the mouse.</title>
        <authorList>
            <person name="Church D.M."/>
            <person name="Goodstadt L."/>
            <person name="Hillier L.W."/>
            <person name="Zody M.C."/>
            <person name="Goldstein S."/>
            <person name="She X."/>
            <person name="Bult C.J."/>
            <person name="Agarwala R."/>
            <person name="Cherry J.L."/>
            <person name="DiCuccio M."/>
            <person name="Hlavina W."/>
            <person name="Kapustin Y."/>
            <person name="Meric P."/>
            <person name="Maglott D."/>
            <person name="Birtle Z."/>
            <person name="Marques A.C."/>
            <person name="Graves T."/>
            <person name="Zhou S."/>
            <person name="Teague B."/>
            <person name="Potamousis K."/>
            <person name="Churas C."/>
            <person name="Place M."/>
            <person name="Herschleb J."/>
            <person name="Runnheim R."/>
            <person name="Forrest D."/>
            <person name="Amos-Landgraf J."/>
            <person name="Schwartz D.C."/>
            <person name="Cheng Z."/>
            <person name="Lindblad-Toh K."/>
            <person name="Eichler E.E."/>
            <person name="Ponting C.P."/>
        </authorList>
    </citation>
    <scope>NUCLEOTIDE SEQUENCE [LARGE SCALE GENOMIC DNA]</scope>
    <source>
        <strain>C57BL/6J</strain>
    </source>
</reference>
<reference key="10">
    <citation type="journal article" date="2002" name="Nature">
        <title>An amino-acid taste receptor.</title>
        <authorList>
            <person name="Nelson G."/>
            <person name="Chandrashekar J."/>
            <person name="Hoon M.A."/>
            <person name="Feng L."/>
            <person name="Zhao G."/>
            <person name="Ryba N.J.P."/>
            <person name="Zuker C.S."/>
        </authorList>
    </citation>
    <scope>FUNCTION</scope>
</reference>
<reference key="11">
    <citation type="journal article" date="2003" name="Cell">
        <title>The receptors for mammalian sweet and umami taste.</title>
        <authorList>
            <person name="Zhao G.Q."/>
            <person name="Zhang Y."/>
            <person name="Hoon M.A."/>
            <person name="Chandrashekar J."/>
            <person name="Erlenbach I."/>
            <person name="Ryba N.J.P."/>
            <person name="Zuker C.S."/>
        </authorList>
    </citation>
    <scope>SWEET AND UMAMI TASTES EXCLUSIVELY MEDIATED BY TAS1R RECEPTORS</scope>
</reference>
<reference key="12">
    <citation type="journal article" date="2003" name="Science">
        <title>Detection of sweet and umami taste in the absence of taste receptor T1r3.</title>
        <authorList>
            <person name="Damak S."/>
            <person name="Rong M."/>
            <person name="Yasumatsu K."/>
            <person name="Kokrashvili Z."/>
            <person name="Varadarajan V."/>
            <person name="Zou S."/>
            <person name="Jiang P."/>
            <person name="Ninomiya Y."/>
            <person name="Margolskee R.F."/>
        </authorList>
    </citation>
    <scope>TAS1R3 INDEPENDENT SWEET- AND UMAMI-RESPONSIVE RECEPTORS</scope>
</reference>
<reference key="13">
    <citation type="journal article" date="2004" name="J. Neurosci.">
        <title>Polymorphisms in the taste receptor gene (Tas1r3) region are associated with saccharin preference in 30 mouse strains.</title>
        <authorList>
            <person name="Reed D.R."/>
            <person name="Li S."/>
            <person name="Li X."/>
            <person name="Huang L."/>
            <person name="Tordoff M.G."/>
            <person name="Starling-Roney R."/>
            <person name="Taniguchi K."/>
            <person name="West D.B."/>
            <person name="Ohmen J.D."/>
            <person name="Beauchamp G.K."/>
            <person name="Bachmanov A.A."/>
        </authorList>
    </citation>
    <scope>VARIANTS ALA-55; THR-60; LEU-61; CYS-261; GLN-371; SER-692; ASN-706; THR-706 AND GLU-855</scope>
    <source>
        <strain>129/J</strain>
        <strain>AKR/J</strain>
        <strain>C57BL/6J</strain>
        <strain>CAST/EiJ</strain>
        <strain>DBA/2J</strain>
        <strain>SWR/J</strain>
    </source>
</reference>
<reference key="14">
    <citation type="journal article" date="2004" name="J. Neurosci.">
        <title>Allelic variation of the Tas1r3 taste receptor gene selectively affects behavioral and neural taste responses to sweeteners in the F2 hybrids between C57BL/6ByJ and 129P3/J mice.</title>
        <authorList>
            <person name="Inoue M."/>
            <person name="Reed D.R."/>
            <person name="Li X."/>
            <person name="Tordoff M.G."/>
            <person name="Beauchamp G.K."/>
            <person name="Bachmanov A.A."/>
        </authorList>
    </citation>
    <scope>ALLELIC VARIATION RESPONSE TO SWEETENERS</scope>
    <source>
        <strain>129/J</strain>
        <strain>C57BL/ByJ</strain>
    </source>
</reference>
<proteinExistence type="evidence at protein level"/>
<comment type="function">
    <text evidence="9 10">Putative taste receptor. TAS1R1/TAS1R3 responds to the umami taste stimulus (the taste of monosodium glutamate) and also to most of the 20 standard L-amino acids, but not to their D-enantiomers or other compounds. TAS1R2/TAS1R3 recognizes diverse natural and synthetic sweeteners. TAS1R3 is essential for the recognition and response to the disaccharide trehalose. Sequence differences within and between species can significantly influence the selectivity and specificity of taste responses.</text>
</comment>
<comment type="subunit">
    <text>Forms homodimers or heterodimers with TAS1R1 and TAS1R2.</text>
</comment>
<comment type="subcellular location">
    <subcellularLocation>
        <location>Cell membrane</location>
        <topology>Multi-pass membrane protein</topology>
    </subcellularLocation>
</comment>
<comment type="tissue specificity">
    <text evidence="2 3 4 5">Expressed in circumvallate, foliate and fungiform taste papillae as well as in taste buds on the palate. Also expressed in testis. Not expressed in brain, heart, kidney, liver or spleen. The topographic distribution in various taste papillae is different from those of other T1R members.</text>
</comment>
<comment type="PTM">
    <text evidence="4">The Thr-60 variant is predicted to introduce a novel N-linked glycosylation site at Asn-58. The addition of even a short carbohydrate group at Asn-58 is predicted to disrupt one of the contact surfaces required for stability of a dimer. Therefore a Thr-60 variant N-glycosylated at Asn-58 is predicted to be precluded from forming homodimers or heterodimers.</text>
</comment>
<comment type="similarity">
    <text evidence="12">Belongs to the G-protein coupled receptor 3 family. TAS1R subfamily.</text>
</comment>
<name>TS1R3_MOUSE</name>
<keyword id="KW-1003">Cell membrane</keyword>
<keyword id="KW-0297">G-protein coupled receptor</keyword>
<keyword id="KW-0325">Glycoprotein</keyword>
<keyword id="KW-0472">Membrane</keyword>
<keyword id="KW-0675">Receptor</keyword>
<keyword id="KW-1185">Reference proteome</keyword>
<keyword id="KW-0716">Sensory transduction</keyword>
<keyword id="KW-0732">Signal</keyword>
<keyword id="KW-0919">Taste</keyword>
<keyword id="KW-0807">Transducer</keyword>
<keyword id="KW-0812">Transmembrane</keyword>
<keyword id="KW-1133">Transmembrane helix</keyword>
<dbReference type="EMBL" id="AB049994">
    <property type="protein sequence ID" value="BAB47181.1"/>
    <property type="molecule type" value="mRNA"/>
</dbReference>
<dbReference type="EMBL" id="AB055708">
    <property type="protein sequence ID" value="BAB62852.1"/>
    <property type="molecule type" value="Genomic_DNA"/>
</dbReference>
<dbReference type="EMBL" id="AF337039">
    <property type="protein sequence ID" value="AAK39436.1"/>
    <property type="molecule type" value="mRNA"/>
</dbReference>
<dbReference type="EMBL" id="AF311386">
    <property type="protein sequence ID" value="AAL08425.1"/>
    <property type="molecule type" value="mRNA"/>
</dbReference>
<dbReference type="EMBL" id="AY032621">
    <property type="protein sequence ID" value="AAK51602.1"/>
    <property type="molecule type" value="mRNA"/>
</dbReference>
<dbReference type="EMBL" id="AY026318">
    <property type="protein sequence ID" value="AAK01937.1"/>
    <property type="molecule type" value="Genomic_DNA"/>
</dbReference>
<dbReference type="EMBL" id="AF368024">
    <property type="protein sequence ID" value="AAK55536.1"/>
    <property type="molecule type" value="Genomic_DNA"/>
</dbReference>
<dbReference type="EMBL" id="AF368025">
    <property type="protein sequence ID" value="AAK55537.1"/>
    <property type="molecule type" value="Genomic_DNA"/>
</dbReference>
<dbReference type="EMBL" id="AL670236">
    <property type="status" value="NOT_ANNOTATED_CDS"/>
    <property type="molecule type" value="Genomic_DNA"/>
</dbReference>
<dbReference type="CCDS" id="CCDS19046.1"/>
<dbReference type="PIR" id="JC7683">
    <property type="entry name" value="JC7683"/>
</dbReference>
<dbReference type="RefSeq" id="NP_114078.1">
    <property type="nucleotide sequence ID" value="NM_031872.2"/>
</dbReference>
<dbReference type="SMR" id="Q925D8"/>
<dbReference type="CORUM" id="Q925D8"/>
<dbReference type="FunCoup" id="Q925D8">
    <property type="interactions" value="152"/>
</dbReference>
<dbReference type="STRING" id="10090.ENSMUSP00000030949"/>
<dbReference type="GlyCosmos" id="Q925D8">
    <property type="glycosylation" value="10 sites, No reported glycans"/>
</dbReference>
<dbReference type="GlyGen" id="Q925D8">
    <property type="glycosylation" value="10 sites"/>
</dbReference>
<dbReference type="iPTMnet" id="Q925D8"/>
<dbReference type="PaxDb" id="10090-ENSMUSP00000030949"/>
<dbReference type="Antibodypedia" id="26289">
    <property type="antibodies" value="331 antibodies from 30 providers"/>
</dbReference>
<dbReference type="DNASU" id="83771"/>
<dbReference type="Ensembl" id="ENSMUST00000030949.4">
    <property type="protein sequence ID" value="ENSMUSP00000030949.4"/>
    <property type="gene ID" value="ENSMUSG00000029072.4"/>
</dbReference>
<dbReference type="GeneID" id="83771"/>
<dbReference type="KEGG" id="mmu:83771"/>
<dbReference type="UCSC" id="uc008wff.1">
    <property type="organism name" value="mouse"/>
</dbReference>
<dbReference type="AGR" id="MGI:1933547"/>
<dbReference type="CTD" id="83756"/>
<dbReference type="MGI" id="MGI:1933547">
    <property type="gene designation" value="Tas1r3"/>
</dbReference>
<dbReference type="VEuPathDB" id="HostDB:ENSMUSG00000029072"/>
<dbReference type="eggNOG" id="KOG1056">
    <property type="taxonomic scope" value="Eukaryota"/>
</dbReference>
<dbReference type="GeneTree" id="ENSGT00940000160679"/>
<dbReference type="HOGENOM" id="CLU_005389_1_0_1"/>
<dbReference type="InParanoid" id="Q925D8"/>
<dbReference type="OMA" id="FHLCCYD"/>
<dbReference type="OrthoDB" id="5984008at2759"/>
<dbReference type="PhylomeDB" id="Q925D8"/>
<dbReference type="TreeFam" id="TF331269"/>
<dbReference type="Reactome" id="R-MMU-418594">
    <property type="pathway name" value="G alpha (i) signalling events"/>
</dbReference>
<dbReference type="Reactome" id="R-MMU-420499">
    <property type="pathway name" value="Class C/3 (Metabotropic glutamate/pheromone receptors)"/>
</dbReference>
<dbReference type="Reactome" id="R-MMU-9717207">
    <property type="pathway name" value="Sensory perception of sweet, bitter, and umami (glutamate) taste"/>
</dbReference>
<dbReference type="BioGRID-ORCS" id="83771">
    <property type="hits" value="5 hits in 78 CRISPR screens"/>
</dbReference>
<dbReference type="ChiTaRS" id="Tas1r3">
    <property type="organism name" value="mouse"/>
</dbReference>
<dbReference type="PRO" id="PR:Q925D8"/>
<dbReference type="Proteomes" id="UP000000589">
    <property type="component" value="Chromosome 4"/>
</dbReference>
<dbReference type="RNAct" id="Q925D8">
    <property type="molecule type" value="protein"/>
</dbReference>
<dbReference type="Bgee" id="ENSMUSG00000029072">
    <property type="expression patterns" value="Expressed in ascending aorta and 43 other cell types or tissues"/>
</dbReference>
<dbReference type="GO" id="GO:0005794">
    <property type="term" value="C:Golgi apparatus"/>
    <property type="evidence" value="ECO:0007669"/>
    <property type="project" value="Ensembl"/>
</dbReference>
<dbReference type="GO" id="GO:0005886">
    <property type="term" value="C:plasma membrane"/>
    <property type="evidence" value="ECO:0000304"/>
    <property type="project" value="MGI"/>
</dbReference>
<dbReference type="GO" id="GO:1903767">
    <property type="term" value="C:sweet taste receptor complex"/>
    <property type="evidence" value="ECO:0007669"/>
    <property type="project" value="Ensembl"/>
</dbReference>
<dbReference type="GO" id="GO:0004930">
    <property type="term" value="F:G protein-coupled receptor activity"/>
    <property type="evidence" value="ECO:0000304"/>
    <property type="project" value="MGI"/>
</dbReference>
<dbReference type="GO" id="GO:0033041">
    <property type="term" value="F:sweet taste receptor activity"/>
    <property type="evidence" value="ECO:0007669"/>
    <property type="project" value="Ensembl"/>
</dbReference>
<dbReference type="GO" id="GO:0007186">
    <property type="term" value="P:G protein-coupled receptor signaling pathway"/>
    <property type="evidence" value="ECO:0000304"/>
    <property type="project" value="MGI"/>
</dbReference>
<dbReference type="GO" id="GO:0050916">
    <property type="term" value="P:sensory perception of sweet taste"/>
    <property type="evidence" value="ECO:0000316"/>
    <property type="project" value="MGI"/>
</dbReference>
<dbReference type="GO" id="GO:0050917">
    <property type="term" value="P:sensory perception of umami taste"/>
    <property type="evidence" value="ECO:0007669"/>
    <property type="project" value="Ensembl"/>
</dbReference>
<dbReference type="FunFam" id="3.40.50.2300:FF:000016">
    <property type="entry name" value="Taste 1 receptor member 2"/>
    <property type="match status" value="1"/>
</dbReference>
<dbReference type="FunFam" id="2.10.50.30:FF:000004">
    <property type="entry name" value="Taste receptor type 1 member 3-like protein"/>
    <property type="match status" value="1"/>
</dbReference>
<dbReference type="Gene3D" id="3.40.50.2300">
    <property type="match status" value="2"/>
</dbReference>
<dbReference type="Gene3D" id="2.10.50.30">
    <property type="entry name" value="GPCR, family 3, nine cysteines domain"/>
    <property type="match status" value="1"/>
</dbReference>
<dbReference type="InterPro" id="IPR001828">
    <property type="entry name" value="ANF_lig-bd_rcpt"/>
</dbReference>
<dbReference type="InterPro" id="IPR000337">
    <property type="entry name" value="GPCR_3"/>
</dbReference>
<dbReference type="InterPro" id="IPR011500">
    <property type="entry name" value="GPCR_3_9-Cys_dom"/>
</dbReference>
<dbReference type="InterPro" id="IPR038550">
    <property type="entry name" value="GPCR_3_9-Cys_sf"/>
</dbReference>
<dbReference type="InterPro" id="IPR017978">
    <property type="entry name" value="GPCR_3_C"/>
</dbReference>
<dbReference type="InterPro" id="IPR000068">
    <property type="entry name" value="GPCR_3_Ca_sens_rcpt-rel"/>
</dbReference>
<dbReference type="InterPro" id="IPR017979">
    <property type="entry name" value="GPCR_3_CS"/>
</dbReference>
<dbReference type="InterPro" id="IPR028082">
    <property type="entry name" value="Peripla_BP_I"/>
</dbReference>
<dbReference type="PANTHER" id="PTHR24061">
    <property type="entry name" value="CALCIUM-SENSING RECEPTOR-RELATED"/>
    <property type="match status" value="1"/>
</dbReference>
<dbReference type="PANTHER" id="PTHR24061:SF435">
    <property type="entry name" value="TASTE RECEPTOR TYPE 1 MEMBER 3"/>
    <property type="match status" value="1"/>
</dbReference>
<dbReference type="Pfam" id="PF00003">
    <property type="entry name" value="7tm_3"/>
    <property type="match status" value="1"/>
</dbReference>
<dbReference type="Pfam" id="PF01094">
    <property type="entry name" value="ANF_receptor"/>
    <property type="match status" value="1"/>
</dbReference>
<dbReference type="Pfam" id="PF07562">
    <property type="entry name" value="NCD3G"/>
    <property type="match status" value="1"/>
</dbReference>
<dbReference type="PRINTS" id="PR00592">
    <property type="entry name" value="CASENSINGR"/>
</dbReference>
<dbReference type="PRINTS" id="PR00248">
    <property type="entry name" value="GPCRMGR"/>
</dbReference>
<dbReference type="SUPFAM" id="SSF53822">
    <property type="entry name" value="Periplasmic binding protein-like I"/>
    <property type="match status" value="1"/>
</dbReference>
<dbReference type="PROSITE" id="PS00980">
    <property type="entry name" value="G_PROTEIN_RECEP_F3_2"/>
    <property type="match status" value="1"/>
</dbReference>
<dbReference type="PROSITE" id="PS50259">
    <property type="entry name" value="G_PROTEIN_RECEP_F3_4"/>
    <property type="match status" value="1"/>
</dbReference>
<sequence>MPALAIMGLSLAAFLELGMGASLCLSQQFKAQGDYILGGLFPLGSTEEATLNQRTQPNSIPCNRFSPLGLFLAMAMKMAVEEINNGSALLPGLRLGYDLFDTCSEPVVTMKSSLMFLAKVGSQSIAAYCNYTQYQPRVLAVIGPHSSELALITGKFFSFFLMPQVSYSASMDRLSDRETFPSFFRTVPSDRVQLQAVVTLLQNFSWNWVAALGSDDDYGREGLSIFSSLANARGICIAHEGLVPQHDTSGQQLGKVLDVLRQVNQSKVQVVVLFASARAVYSLFSYSIHHGLSPKVWVASESWLTSDLVMTLPNIARVGTVLGFLQRGALLPEFSHYVETHLALAADPAFCASLNAELDLEEHVMGQRCPRCDDIMLQNLSSGLLQNLSAGQLHHQIFATYAAVYSVAQALHNTLQCNVSHCHVSEHVLPWQLLENMYNMSFHARDLTLQFDAEGNVDMEYDLKMWVWQSPTPVLHTVGTFNGTLQLQQSKMYWPGNQVPVSQCSRQCKDGQVRRVKGFHSCCYDCVDCKAGSYRKHPDDFTCTPCNQDQWSPEKSTACLPRRPKFLAWGEPVVLSLLLLLCLVLGLALAALGLSVHHWDSPLVQASGGSQFCFGLICLGLFCLSVLLFPGRPSSASCLAQQPMAHLPLTGCLSTLFLQAAETFVESELPLSWANWLCSYLRGLWAWLVVLLATFVEAALCAWYLIAFPPEVVTDWSVLPTEVLEHCHVRSWVSLGLVHITNAMLAFLCFLGTFLVQSQPGRYNRARGLTFAMLAYFITWVSFVPLLANVQVAYQPAVQMGAILVCALGILVTFHLPKCYVLLWLPKLNTQEFFLGRNAKKAADENSGGGEAAQGHNE</sequence>
<accession>Q925D8</accession>
<accession>A2ADA0</accession>
<accession>Q91VA4</accession>
<accession>Q923K0</accession>
<accession>Q925A4</accession>
<accession>Q925D9</accession>
<gene>
    <name type="primary">Tas1r3</name>
    <name type="synonym">Sac</name>
    <name type="synonym">T1r3</name>
    <name type="synonym">Tr3</name>
</gene>
<evidence type="ECO:0000255" key="1"/>
<evidence type="ECO:0000269" key="2">
    <source>
    </source>
</evidence>
<evidence type="ECO:0000269" key="3">
    <source>
    </source>
</evidence>
<evidence type="ECO:0000269" key="4">
    <source>
    </source>
</evidence>
<evidence type="ECO:0000269" key="5">
    <source>
    </source>
</evidence>
<evidence type="ECO:0000269" key="6">
    <source>
    </source>
</evidence>
<evidence type="ECO:0000269" key="7">
    <source>
    </source>
</evidence>
<evidence type="ECO:0000269" key="8">
    <source>
    </source>
</evidence>
<evidence type="ECO:0000269" key="9">
    <source>
    </source>
</evidence>
<evidence type="ECO:0000269" key="10">
    <source>
    </source>
</evidence>
<evidence type="ECO:0000269" key="11">
    <source>
    </source>
</evidence>
<evidence type="ECO:0000305" key="12"/>
<evidence type="ECO:0000305" key="13">
    <source>
    </source>
</evidence>
<protein>
    <recommendedName>
        <fullName>Taste receptor type 1 member 3</fullName>
    </recommendedName>
    <alternativeName>
        <fullName>Saccharin preference protein</fullName>
    </alternativeName>
    <alternativeName>
        <fullName>Sweet taste receptor T1R3</fullName>
    </alternativeName>
</protein>
<feature type="signal peptide" evidence="1">
    <location>
        <begin position="1"/>
        <end position="20"/>
    </location>
</feature>
<feature type="chain" id="PRO_0000012962" description="Taste receptor type 1 member 3">
    <location>
        <begin position="21"/>
        <end position="858"/>
    </location>
</feature>
<feature type="topological domain" description="Extracellular" evidence="1">
    <location>
        <begin position="21"/>
        <end position="572"/>
    </location>
</feature>
<feature type="transmembrane region" description="Helical; Name=1" evidence="1">
    <location>
        <begin position="573"/>
        <end position="593"/>
    </location>
</feature>
<feature type="topological domain" description="Cytoplasmic" evidence="1">
    <location>
        <begin position="594"/>
        <end position="610"/>
    </location>
</feature>
<feature type="transmembrane region" description="Helical; Name=2" evidence="1">
    <location>
        <begin position="611"/>
        <end position="631"/>
    </location>
</feature>
<feature type="topological domain" description="Extracellular" evidence="1">
    <location>
        <begin position="632"/>
        <end position="644"/>
    </location>
</feature>
<feature type="transmembrane region" description="Helical; Name=3" evidence="1">
    <location>
        <begin position="645"/>
        <end position="665"/>
    </location>
</feature>
<feature type="topological domain" description="Cytoplasmic" evidence="1">
    <location>
        <begin position="666"/>
        <end position="687"/>
    </location>
</feature>
<feature type="transmembrane region" description="Helical; Name=4" evidence="1">
    <location>
        <begin position="688"/>
        <end position="708"/>
    </location>
</feature>
<feature type="topological domain" description="Extracellular" evidence="1">
    <location>
        <begin position="709"/>
        <end position="735"/>
    </location>
</feature>
<feature type="transmembrane region" description="Helical; Name=5" evidence="1">
    <location>
        <begin position="736"/>
        <end position="756"/>
    </location>
</feature>
<feature type="topological domain" description="Cytoplasmic" evidence="1">
    <location>
        <begin position="757"/>
        <end position="767"/>
    </location>
</feature>
<feature type="transmembrane region" description="Helical; Name=6" evidence="1">
    <location>
        <begin position="768"/>
        <end position="788"/>
    </location>
</feature>
<feature type="topological domain" description="Extracellular" evidence="1">
    <location>
        <begin position="789"/>
        <end position="796"/>
    </location>
</feature>
<feature type="transmembrane region" description="Helical; Name=7" evidence="1">
    <location>
        <begin position="797"/>
        <end position="817"/>
    </location>
</feature>
<feature type="topological domain" description="Cytoplasmic" evidence="1">
    <location>
        <begin position="818"/>
        <end position="858"/>
    </location>
</feature>
<feature type="glycosylation site" description="N-linked (GlcNAc...) asparagine; when associated with variant T-60" evidence="13">
    <location>
        <position position="58"/>
    </location>
</feature>
<feature type="glycosylation site" description="N-linked (GlcNAc...) asparagine" evidence="1">
    <location>
        <position position="85"/>
    </location>
</feature>
<feature type="glycosylation site" description="N-linked (GlcNAc...) asparagine" evidence="1">
    <location>
        <position position="130"/>
    </location>
</feature>
<feature type="glycosylation site" description="N-linked (GlcNAc...) asparagine" evidence="1">
    <location>
        <position position="203"/>
    </location>
</feature>
<feature type="glycosylation site" description="N-linked (GlcNAc...) asparagine" evidence="1">
    <location>
        <position position="264"/>
    </location>
</feature>
<feature type="glycosylation site" description="N-linked (GlcNAc...) asparagine" evidence="1">
    <location>
        <position position="379"/>
    </location>
</feature>
<feature type="glycosylation site" description="N-linked (GlcNAc...) asparagine" evidence="1">
    <location>
        <position position="387"/>
    </location>
</feature>
<feature type="glycosylation site" description="N-linked (GlcNAc...) asparagine" evidence="1">
    <location>
        <position position="418"/>
    </location>
</feature>
<feature type="glycosylation site" description="N-linked (GlcNAc...) asparagine" evidence="1">
    <location>
        <position position="439"/>
    </location>
</feature>
<feature type="glycosylation site" description="N-linked (GlcNAc...) asparagine" evidence="1">
    <location>
        <position position="482"/>
    </location>
</feature>
<feature type="sequence variant" description="In strain: 129/J, 129/SvEv, AKR/J, BALB/c, C3H/HeJ, DBA/2J and DBA/2J." evidence="2 3 4 5 6 7 8 11">
    <original>T</original>
    <variation>A</variation>
    <location>
        <position position="55"/>
    </location>
</feature>
<feature type="sequence variant" description="In strain: 129/J, 129/SvEv, AKR/J, BALB/c, C3H/HeJ, DBA/2J and DBA/2J; may influence the ability to form dimers or bind sweeteners." evidence="2 3 4 5 6 7 8 11">
    <original>I</original>
    <variation>T</variation>
    <location>
        <position position="60"/>
    </location>
</feature>
<feature type="sequence variant" description="In strain: 129/J, 129/SvEv, AKR/J, BALB/c, C3H/HeJ, CAST/Ei, DBA/2J, FVB/N, ST/bJ and SWR/J." evidence="2 3 4 5 6 8 11">
    <original>P</original>
    <variation>L</variation>
    <location>
        <position position="61"/>
    </location>
</feature>
<feature type="sequence variant" description="In strain: FVB/N, ST/bJ, SWR/J." evidence="2 4 6 11">
    <original>R</original>
    <variation>C</variation>
    <location>
        <position position="261"/>
    </location>
</feature>
<feature type="sequence variant" description="In strain: 129/J, 129/SvEv, AKR/J, BALB/c, CAST/Ei, C3H/HeJ, DBA/2J, FVB/N, ST/bJ and SWR/J." evidence="2 3 4 5 6 11">
    <original>R</original>
    <variation>Q</variation>
    <location>
        <position position="371"/>
    </location>
</feature>
<feature type="sequence variant" description="In strain: FVB/N, ST/bJ and SWR/J." evidence="2 4 6 11">
    <original>L</original>
    <variation>S</variation>
    <location>
        <position position="692"/>
    </location>
</feature>
<feature type="sequence variant" description="In strain: SWR/J." evidence="10 11">
    <original>I</original>
    <variation>N</variation>
    <location>
        <position position="706"/>
    </location>
</feature>
<feature type="sequence variant" description="In strain: 129/J, 129/SvEv, AKR/J, BALB/c, C3H/HeJ, DBA/2J, DBA/2J, FVB/N, ST/bJ and SWR/J." evidence="2 3 4 5 6 11">
    <original>I</original>
    <variation>T</variation>
    <location>
        <position position="706"/>
    </location>
</feature>
<feature type="sequence variant" description="In strain: 129/J, AKR/J, CAST/Ei, DBA/2J and SWR/J." evidence="2 5 6 11">
    <original>G</original>
    <variation>E</variation>
    <location>
        <position position="855"/>
    </location>
</feature>
<feature type="sequence conflict" description="In Ref. 8; AAK55537." evidence="12" ref="8">
    <original>F</original>
    <variation>L</variation>
    <location>
        <position position="184"/>
    </location>
</feature>
<organism>
    <name type="scientific">Mus musculus</name>
    <name type="common">Mouse</name>
    <dbReference type="NCBI Taxonomy" id="10090"/>
    <lineage>
        <taxon>Eukaryota</taxon>
        <taxon>Metazoa</taxon>
        <taxon>Chordata</taxon>
        <taxon>Craniata</taxon>
        <taxon>Vertebrata</taxon>
        <taxon>Euteleostomi</taxon>
        <taxon>Mammalia</taxon>
        <taxon>Eutheria</taxon>
        <taxon>Euarchontoglires</taxon>
        <taxon>Glires</taxon>
        <taxon>Rodentia</taxon>
        <taxon>Myomorpha</taxon>
        <taxon>Muroidea</taxon>
        <taxon>Muridae</taxon>
        <taxon>Murinae</taxon>
        <taxon>Mus</taxon>
        <taxon>Mus</taxon>
    </lineage>
</organism>